<dbReference type="EC" id="3.4.22.55"/>
<dbReference type="EMBL" id="U77933">
    <property type="protein sequence ID" value="AAB96379.1"/>
    <property type="molecule type" value="mRNA"/>
</dbReference>
<dbReference type="EMBL" id="AF136231">
    <property type="protein sequence ID" value="AAD33684.1"/>
    <property type="molecule type" value="mRNA"/>
</dbReference>
<dbReference type="EMBL" id="AF136232">
    <property type="protein sequence ID" value="AAD33685.1"/>
    <property type="molecule type" value="mRNA"/>
</dbReference>
<dbReference type="EMBL" id="AF025671">
    <property type="protein sequence ID" value="AAB82567.1"/>
    <property type="status" value="ALT_FRAME"/>
    <property type="molecule type" value="mRNA"/>
</dbReference>
<dbReference type="EMBL" id="U34684">
    <property type="protein sequence ID" value="AAC52260.1"/>
    <property type="molecule type" value="mRNA"/>
</dbReference>
<dbReference type="PIR" id="I67436">
    <property type="entry name" value="I67436"/>
</dbReference>
<dbReference type="PIR" id="JC6507">
    <property type="entry name" value="JC6507"/>
</dbReference>
<dbReference type="RefSeq" id="NP_071967.2">
    <molecule id="P55215-1"/>
    <property type="nucleotide sequence ID" value="NM_022522.2"/>
</dbReference>
<dbReference type="SMR" id="P55215"/>
<dbReference type="DIP" id="DIP-48602N"/>
<dbReference type="FunCoup" id="P55215">
    <property type="interactions" value="3016"/>
</dbReference>
<dbReference type="IntAct" id="P55215">
    <property type="interactions" value="3"/>
</dbReference>
<dbReference type="STRING" id="10116.ENSRNOP00000022672"/>
<dbReference type="MEROPS" id="C14.006"/>
<dbReference type="iPTMnet" id="P55215"/>
<dbReference type="PhosphoSitePlus" id="P55215"/>
<dbReference type="PaxDb" id="10116-ENSRNOP00000022672"/>
<dbReference type="Ensembl" id="ENSRNOT00000022672.7">
    <molecule id="P55215-1"/>
    <property type="protein sequence ID" value="ENSRNOP00000022672.2"/>
    <property type="gene ID" value="ENSRNOG00000016707.8"/>
</dbReference>
<dbReference type="GeneID" id="64314"/>
<dbReference type="KEGG" id="rno:64314"/>
<dbReference type="UCSC" id="RGD:69274">
    <molecule id="P55215-1"/>
    <property type="organism name" value="rat"/>
</dbReference>
<dbReference type="AGR" id="RGD:69274"/>
<dbReference type="CTD" id="835"/>
<dbReference type="RGD" id="69274">
    <property type="gene designation" value="Casp2"/>
</dbReference>
<dbReference type="eggNOG" id="KOG3573">
    <property type="taxonomic scope" value="Eukaryota"/>
</dbReference>
<dbReference type="GeneTree" id="ENSGT00940000156657"/>
<dbReference type="HOGENOM" id="CLU_036904_5_2_1"/>
<dbReference type="InParanoid" id="P55215"/>
<dbReference type="OMA" id="VCYANTP"/>
<dbReference type="OrthoDB" id="10004338at2759"/>
<dbReference type="PhylomeDB" id="P55215"/>
<dbReference type="TreeFam" id="TF102023"/>
<dbReference type="BRENDA" id="3.4.22.55">
    <property type="organism ID" value="5301"/>
</dbReference>
<dbReference type="Reactome" id="R-RNO-168638">
    <property type="pathway name" value="NOD1/2 Signaling Pathway"/>
</dbReference>
<dbReference type="Reactome" id="R-RNO-205025">
    <property type="pathway name" value="NADE modulates death signalling"/>
</dbReference>
<dbReference type="Reactome" id="R-RNO-6803207">
    <property type="pathway name" value="TP53 Regulates Transcription of Caspase Activators and Caspases"/>
</dbReference>
<dbReference type="PRO" id="PR:P55215"/>
<dbReference type="Proteomes" id="UP000002494">
    <property type="component" value="Chromosome 4"/>
</dbReference>
<dbReference type="Bgee" id="ENSRNOG00000016707">
    <property type="expression patterns" value="Expressed in thymus and 20 other cell types or tissues"/>
</dbReference>
<dbReference type="ExpressionAtlas" id="P55215">
    <property type="expression patterns" value="baseline and differential"/>
</dbReference>
<dbReference type="GO" id="GO:0005737">
    <property type="term" value="C:cytoplasm"/>
    <property type="evidence" value="ECO:0000266"/>
    <property type="project" value="RGD"/>
</dbReference>
<dbReference type="GO" id="GO:1905369">
    <property type="term" value="C:endopeptidase complex"/>
    <property type="evidence" value="ECO:0000266"/>
    <property type="project" value="RGD"/>
</dbReference>
<dbReference type="GO" id="GO:0005634">
    <property type="term" value="C:nucleus"/>
    <property type="evidence" value="ECO:0000266"/>
    <property type="project" value="RGD"/>
</dbReference>
<dbReference type="GO" id="GO:0004197">
    <property type="term" value="F:cysteine-type endopeptidase activity"/>
    <property type="evidence" value="ECO:0000266"/>
    <property type="project" value="RGD"/>
</dbReference>
<dbReference type="GO" id="GO:0042802">
    <property type="term" value="F:identical protein binding"/>
    <property type="evidence" value="ECO:0000266"/>
    <property type="project" value="RGD"/>
</dbReference>
<dbReference type="GO" id="GO:0019904">
    <property type="term" value="F:protein domain specific binding"/>
    <property type="evidence" value="ECO:0000266"/>
    <property type="project" value="RGD"/>
</dbReference>
<dbReference type="GO" id="GO:0006915">
    <property type="term" value="P:apoptotic process"/>
    <property type="evidence" value="ECO:0000318"/>
    <property type="project" value="GO_Central"/>
</dbReference>
<dbReference type="GO" id="GO:0097190">
    <property type="term" value="P:apoptotic signaling pathway"/>
    <property type="evidence" value="ECO:0000266"/>
    <property type="project" value="RGD"/>
</dbReference>
<dbReference type="GO" id="GO:0071260">
    <property type="term" value="P:cellular response to mechanical stimulus"/>
    <property type="evidence" value="ECO:0000266"/>
    <property type="project" value="RGD"/>
</dbReference>
<dbReference type="GO" id="GO:0030330">
    <property type="term" value="P:DNA damage response, signal transduction by p53 class mediator"/>
    <property type="evidence" value="ECO:0000266"/>
    <property type="project" value="RGD"/>
</dbReference>
<dbReference type="GO" id="GO:0035234">
    <property type="term" value="P:ectopic germ cell programmed cell death"/>
    <property type="evidence" value="ECO:0000266"/>
    <property type="project" value="RGD"/>
</dbReference>
<dbReference type="GO" id="GO:0097192">
    <property type="term" value="P:extrinsic apoptotic signaling pathway in absence of ligand"/>
    <property type="evidence" value="ECO:0000266"/>
    <property type="project" value="RGD"/>
</dbReference>
<dbReference type="GO" id="GO:0008630">
    <property type="term" value="P:intrinsic apoptotic signaling pathway in response to DNA damage"/>
    <property type="evidence" value="ECO:0000318"/>
    <property type="project" value="GO_Central"/>
</dbReference>
<dbReference type="GO" id="GO:0001554">
    <property type="term" value="P:luteolysis"/>
    <property type="evidence" value="ECO:0000270"/>
    <property type="project" value="RGD"/>
</dbReference>
<dbReference type="GO" id="GO:0003407">
    <property type="term" value="P:neural retina development"/>
    <property type="evidence" value="ECO:0000270"/>
    <property type="project" value="RGD"/>
</dbReference>
<dbReference type="GO" id="GO:0043065">
    <property type="term" value="P:positive regulation of apoptotic process"/>
    <property type="evidence" value="ECO:0000266"/>
    <property type="project" value="RGD"/>
</dbReference>
<dbReference type="GO" id="GO:2001235">
    <property type="term" value="P:positive regulation of apoptotic signaling pathway"/>
    <property type="evidence" value="ECO:0000266"/>
    <property type="project" value="RGD"/>
</dbReference>
<dbReference type="GO" id="GO:0043525">
    <property type="term" value="P:positive regulation of neuron apoptotic process"/>
    <property type="evidence" value="ECO:0000315"/>
    <property type="project" value="RGD"/>
</dbReference>
<dbReference type="GO" id="GO:0012501">
    <property type="term" value="P:programmed cell death"/>
    <property type="evidence" value="ECO:0000304"/>
    <property type="project" value="RGD"/>
</dbReference>
<dbReference type="GO" id="GO:0016485">
    <property type="term" value="P:protein processing"/>
    <property type="evidence" value="ECO:0000266"/>
    <property type="project" value="RGD"/>
</dbReference>
<dbReference type="GO" id="GO:0006508">
    <property type="term" value="P:proteolysis"/>
    <property type="evidence" value="ECO:0000304"/>
    <property type="project" value="RGD"/>
</dbReference>
<dbReference type="CDD" id="cd08332">
    <property type="entry name" value="CARD_CASP2"/>
    <property type="match status" value="1"/>
</dbReference>
<dbReference type="CDD" id="cd00032">
    <property type="entry name" value="CASc"/>
    <property type="match status" value="1"/>
</dbReference>
<dbReference type="FunFam" id="3.40.50.1460:FF:000009">
    <property type="entry name" value="Caspase 2"/>
    <property type="match status" value="1"/>
</dbReference>
<dbReference type="FunFam" id="1.10.533.10:FF:000024">
    <property type="entry name" value="caspase-2 isoform X1"/>
    <property type="match status" value="1"/>
</dbReference>
<dbReference type="FunFam" id="3.30.70.1470:FF:000001">
    <property type="entry name" value="Putative caspase-2"/>
    <property type="match status" value="1"/>
</dbReference>
<dbReference type="Gene3D" id="3.40.50.1460">
    <property type="match status" value="1"/>
</dbReference>
<dbReference type="Gene3D" id="3.30.70.1470">
    <property type="entry name" value="Caspase-like"/>
    <property type="match status" value="1"/>
</dbReference>
<dbReference type="Gene3D" id="1.10.533.10">
    <property type="entry name" value="Death Domain, Fas"/>
    <property type="match status" value="1"/>
</dbReference>
<dbReference type="InterPro" id="IPR001315">
    <property type="entry name" value="CARD"/>
</dbReference>
<dbReference type="InterPro" id="IPR035702">
    <property type="entry name" value="CASP2_CARD"/>
</dbReference>
<dbReference type="InterPro" id="IPR029030">
    <property type="entry name" value="Caspase-like_dom_sf"/>
</dbReference>
<dbReference type="InterPro" id="IPR033139">
    <property type="entry name" value="Caspase_cys_AS"/>
</dbReference>
<dbReference type="InterPro" id="IPR016129">
    <property type="entry name" value="Caspase_his_AS"/>
</dbReference>
<dbReference type="InterPro" id="IPR011029">
    <property type="entry name" value="DEATH-like_dom_sf"/>
</dbReference>
<dbReference type="InterPro" id="IPR002398">
    <property type="entry name" value="Pept_C14"/>
</dbReference>
<dbReference type="InterPro" id="IPR011600">
    <property type="entry name" value="Pept_C14_caspase"/>
</dbReference>
<dbReference type="InterPro" id="IPR002138">
    <property type="entry name" value="Pept_C14_p10"/>
</dbReference>
<dbReference type="InterPro" id="IPR001309">
    <property type="entry name" value="Pept_C14_p20"/>
</dbReference>
<dbReference type="InterPro" id="IPR015917">
    <property type="entry name" value="Pept_C14A"/>
</dbReference>
<dbReference type="PANTHER" id="PTHR47901:SF7">
    <property type="entry name" value="CASPASE 2"/>
    <property type="match status" value="1"/>
</dbReference>
<dbReference type="PANTHER" id="PTHR47901">
    <property type="entry name" value="CASPASE RECRUITMENT DOMAIN-CONTAINING PROTEIN 18"/>
    <property type="match status" value="1"/>
</dbReference>
<dbReference type="Pfam" id="PF00619">
    <property type="entry name" value="CARD"/>
    <property type="match status" value="1"/>
</dbReference>
<dbReference type="Pfam" id="PF00656">
    <property type="entry name" value="Peptidase_C14"/>
    <property type="match status" value="1"/>
</dbReference>
<dbReference type="PIRSF" id="PIRSF038001">
    <property type="entry name" value="Caspase_ICE"/>
    <property type="match status" value="1"/>
</dbReference>
<dbReference type="PRINTS" id="PR00376">
    <property type="entry name" value="IL1BCENZYME"/>
</dbReference>
<dbReference type="SMART" id="SM00114">
    <property type="entry name" value="CARD"/>
    <property type="match status" value="1"/>
</dbReference>
<dbReference type="SMART" id="SM00115">
    <property type="entry name" value="CASc"/>
    <property type="match status" value="1"/>
</dbReference>
<dbReference type="SUPFAM" id="SSF52129">
    <property type="entry name" value="Caspase-like"/>
    <property type="match status" value="1"/>
</dbReference>
<dbReference type="SUPFAM" id="SSF47986">
    <property type="entry name" value="DEATH domain"/>
    <property type="match status" value="1"/>
</dbReference>
<dbReference type="PROSITE" id="PS50209">
    <property type="entry name" value="CARD"/>
    <property type="match status" value="1"/>
</dbReference>
<dbReference type="PROSITE" id="PS01122">
    <property type="entry name" value="CASPASE_CYS"/>
    <property type="match status" value="1"/>
</dbReference>
<dbReference type="PROSITE" id="PS01121">
    <property type="entry name" value="CASPASE_HIS"/>
    <property type="match status" value="1"/>
</dbReference>
<dbReference type="PROSITE" id="PS50207">
    <property type="entry name" value="CASPASE_P10"/>
    <property type="match status" value="1"/>
</dbReference>
<dbReference type="PROSITE" id="PS50208">
    <property type="entry name" value="CASPASE_P20"/>
    <property type="match status" value="1"/>
</dbReference>
<sequence>MAASSGRSQSSLHRKGLMAADRRSRILAVCGMHPDHQETLKKNRVVLAKQLLLSELLEHLLEKDIITLEMRELIQAKGGSFSQNVELLNLLPKRGPQAFDAFCEALRETRQGHLEDLLLTTLSDIQHILPPLSCDYDSSLPFSVCESCPPHKQSRLSTDTMEHSLDNGDGPPCLQVKPCTPEFYQAHYQLAYRLQSQPRGLALVMSNVHFTGEKDLEFRSGGDVDHTTLVTLFKLLGYNVHVLYDQTAQEMQEKLQNFAQLPAHRVTDSCIVALLSHGVEGGIYGVDGKLLQLQEVFRLFDNANCPSLQNKPKMFFIQACRGDETDRGVDQQDGKNHAQSPGCEESDAGKEELMKMRLPTRSDMICGYACLKGNAAMRNTKRGSWYIEALTQVFSERACDMHVADMLVKVNALIKEREGYAPGTEFHRCKEMSEYCSTLCQQLYLFPGYPPT</sequence>
<reference key="1">
    <citation type="journal article" date="1997" name="Gene">
        <title>Cloning and expression of the cDNA encoding rat caspase-2.</title>
        <authorList>
            <person name="Sato N."/>
            <person name="Milligan C.E."/>
            <person name="Uchiyama Y."/>
            <person name="Oppenheim R.W."/>
        </authorList>
    </citation>
    <scope>NUCLEOTIDE SEQUENCE [MRNA] (ISOFORM 1)</scope>
</reference>
<reference key="2">
    <citation type="journal article" date="2002" name="J. Neurochem.">
        <title>Two caspase-2 transcripts are expressed in rat hippocampus after global cerebral ischemia.</title>
        <authorList>
            <person name="Jin K."/>
            <person name="Nagayama T."/>
            <person name="Mao X."/>
            <person name="Kawaguchi K."/>
            <person name="Hickey R.W."/>
            <person name="Greenberg D.A."/>
            <person name="Simon R.P."/>
            <person name="Graham S.H."/>
        </authorList>
    </citation>
    <scope>NUCLEOTIDE SEQUENCE [MRNA] (ISOFORMS 1 AND 2)</scope>
    <source>
        <strain>Sprague-Dawley</strain>
        <tissue>Brain</tissue>
    </source>
</reference>
<reference key="3">
    <citation type="journal article" date="1998" name="Am. J. Physiol.">
        <title>Identification of gene family of caspases in rat kidney and altered expression in ischemia-reperfusion injury.</title>
        <authorList>
            <person name="Kaushal G.P."/>
            <person name="Singh A.B."/>
            <person name="Shah S.V."/>
        </authorList>
    </citation>
    <scope>NUCLEOTIDE SEQUENCE [MRNA] OF 67-324</scope>
    <source>
        <strain>Sprague-Dawley</strain>
        <tissue>Kidney cortex</tissue>
    </source>
</reference>
<reference key="4">
    <citation type="journal article" date="1995" name="Endocrinology">
        <title>Interleukin-1 beta-converting enzyme-related proteases (IRPs) and mammalian cell death: dissociation of IRP-induced oligonucleosomal endonuclease activity from morphological apoptosis in granulosa cells of the ovarian follicle.</title>
        <authorList>
            <person name="Flaws J.A."/>
            <person name="Kugu K."/>
            <person name="Trbovich A.M."/>
            <person name="Desanti A."/>
            <person name="Tilly K.I."/>
            <person name="Hirshfield A.N."/>
            <person name="Tilly J.L."/>
        </authorList>
    </citation>
    <scope>NUCLEOTIDE SEQUENCE [MRNA] OF 198-379</scope>
    <source>
        <tissue>Ovary</tissue>
    </source>
</reference>
<reference key="5">
    <citation type="journal article" date="2006" name="J. Cell. Biochem.">
        <title>ARC protects rat cardiomyocytes against oxidative stress through inhibition of caspase-2 mediated mitochondrial pathway.</title>
        <authorList>
            <person name="Zhang Y.Q."/>
            <person name="Herman B."/>
        </authorList>
    </citation>
    <scope>INTERACTION WITH NOL3</scope>
</reference>
<keyword id="KW-0007">Acetylation</keyword>
<keyword id="KW-0025">Alternative splicing</keyword>
<keyword id="KW-0053">Apoptosis</keyword>
<keyword id="KW-0378">Hydrolase</keyword>
<keyword id="KW-0597">Phosphoprotein</keyword>
<keyword id="KW-0645">Protease</keyword>
<keyword id="KW-1185">Reference proteome</keyword>
<keyword id="KW-0788">Thiol protease</keyword>
<keyword id="KW-0865">Zymogen</keyword>
<organism>
    <name type="scientific">Rattus norvegicus</name>
    <name type="common">Rat</name>
    <dbReference type="NCBI Taxonomy" id="10116"/>
    <lineage>
        <taxon>Eukaryota</taxon>
        <taxon>Metazoa</taxon>
        <taxon>Chordata</taxon>
        <taxon>Craniata</taxon>
        <taxon>Vertebrata</taxon>
        <taxon>Euteleostomi</taxon>
        <taxon>Mammalia</taxon>
        <taxon>Eutheria</taxon>
        <taxon>Euarchontoglires</taxon>
        <taxon>Glires</taxon>
        <taxon>Rodentia</taxon>
        <taxon>Myomorpha</taxon>
        <taxon>Muroidea</taxon>
        <taxon>Muridae</taxon>
        <taxon>Murinae</taxon>
        <taxon>Rattus</taxon>
    </lineage>
</organism>
<gene>
    <name type="primary">Casp2</name>
    <name type="synonym">Ich1</name>
</gene>
<proteinExistence type="evidence at protein level"/>
<comment type="function">
    <text evidence="2">Involved in the activation cascade of caspases responsible for apoptosis execution. Might function by either activating some proteins required for cell death or inactivating proteins necessary for cell survival (By similarity). Associates with PIDD1 and CRADD to form the PIDDosome, a complex that activates CASP2 and triggers apoptosis in response to genotoxic stress (By similarity).</text>
</comment>
<comment type="catalytic activity">
    <reaction>
        <text>Strict requirement for an Asp residue at P1, with 316-Asp being essential for proteolytic activity and has a preferred cleavage sequence of Val-Asp-Val-Ala-Asp-|-.</text>
        <dbReference type="EC" id="3.4.22.55"/>
    </reaction>
</comment>
<comment type="subunit">
    <text evidence="2 5">Heterotetramer that consists of two anti-parallel arranged heterodimers, each one formed by a p18 subunit and a p12 subunit. Forms a complex named the PIDDosome with PIDD1 and CRADD (By similarity). Interacts with NOL3 (via CARD domain); inhibits CASP2 activity in a phosphorylation-dependent manner (PubMed:16639714).</text>
</comment>
<comment type="alternative products">
    <event type="alternative splicing"/>
    <isoform>
        <id>P55215-1</id>
        <name>1</name>
        <name>caspase-2L</name>
        <sequence type="displayed"/>
    </isoform>
    <isoform>
        <id>P55215-2</id>
        <name>2</name>
        <name>caspase-2S</name>
        <sequence type="described" ref="VSP_016555 VSP_016556"/>
    </isoform>
</comment>
<comment type="domain">
    <text evidence="2">The CARD domain mediates a direct interaction with CRADD.</text>
</comment>
<comment type="PTM">
    <text evidence="1">The mature protease can process its own propeptide, but not that of other caspases.</text>
</comment>
<comment type="similarity">
    <text evidence="7">Belongs to the peptidase C14A family.</text>
</comment>
<comment type="sequence caution" evidence="7">
    <conflict type="frameshift">
        <sequence resource="EMBL-CDS" id="AAB82567"/>
    </conflict>
</comment>
<feature type="initiator methionine" description="Removed" evidence="2">
    <location>
        <position position="1"/>
    </location>
</feature>
<feature type="propeptide" id="PRO_0000043403">
    <location>
        <begin position="2"/>
        <end position="169"/>
    </location>
</feature>
<feature type="chain" id="PRO_0000044573" description="Caspase-2 subunit p18" evidence="1">
    <location>
        <begin position="170"/>
        <end position="325"/>
    </location>
</feature>
<feature type="propeptide" id="PRO_0000044574">
    <location>
        <begin position="326"/>
        <end position="333"/>
    </location>
</feature>
<feature type="chain" id="PRO_0000004551" description="Caspase-2 subunit p13" evidence="1">
    <location>
        <begin position="334"/>
        <end position="452"/>
    </location>
</feature>
<feature type="chain" id="PRO_0000004552" description="Caspase-2 subunit p12" evidence="1">
    <location>
        <begin position="348"/>
        <end position="452"/>
    </location>
</feature>
<feature type="domain" description="CARD" evidence="3">
    <location>
        <begin position="32"/>
        <end position="121"/>
    </location>
</feature>
<feature type="region of interest" description="Disordered" evidence="4">
    <location>
        <begin position="327"/>
        <end position="349"/>
    </location>
</feature>
<feature type="compositionally biased region" description="Basic and acidic residues" evidence="4">
    <location>
        <begin position="327"/>
        <end position="336"/>
    </location>
</feature>
<feature type="active site" evidence="1">
    <location>
        <position position="277"/>
    </location>
</feature>
<feature type="active site" evidence="1">
    <location>
        <position position="320"/>
    </location>
</feature>
<feature type="modified residue" description="N-acetylalanine" evidence="2">
    <location>
        <position position="2"/>
    </location>
</feature>
<feature type="modified residue" description="Phosphoserine" evidence="2">
    <location>
        <position position="157"/>
    </location>
</feature>
<feature type="modified residue" description="Phosphoserine" evidence="2">
    <location>
        <position position="340"/>
    </location>
</feature>
<feature type="splice variant" id="VSP_016555" description="In isoform 2." evidence="6">
    <original>DETDRGVDQQDGKNHAQSPGC</original>
    <variation>GAIGSLGPLLLFTAATASLAL</variation>
    <location>
        <begin position="323"/>
        <end position="343"/>
    </location>
</feature>
<feature type="splice variant" id="VSP_016556" description="In isoform 2." evidence="6">
    <location>
        <begin position="344"/>
        <end position="452"/>
    </location>
</feature>
<feature type="sequence conflict" description="In Ref. 3; AAB82567." evidence="7" ref="3">
    <original>C</original>
    <variation>Y</variation>
    <location>
        <position position="145"/>
    </location>
</feature>
<feature type="sequence conflict" description="In Ref. 3; AAB82567." evidence="7" ref="3">
    <original>D</original>
    <variation>H</variation>
    <location>
        <position position="166"/>
    </location>
</feature>
<feature type="sequence conflict" description="In Ref. 3; AAB82567." evidence="7" ref="3">
    <original>K</original>
    <variation>E</variation>
    <location>
        <position position="177"/>
    </location>
</feature>
<feature type="sequence conflict" description="In Ref. 3; AAB82567." evidence="7" ref="3">
    <original>Q</original>
    <variation>R</variation>
    <location>
        <position position="197"/>
    </location>
</feature>
<feature type="sequence conflict" description="In Ref. 4; AAC52260." evidence="7" ref="4">
    <original>S</original>
    <variation>P</variation>
    <location>
        <position position="340"/>
    </location>
</feature>
<feature type="sequence conflict" description="In Ref. 4; AAC52260." evidence="7" ref="4">
    <original>AG</original>
    <variation>TV</variation>
    <location>
        <begin position="348"/>
        <end position="349"/>
    </location>
</feature>
<feature type="sequence conflict" description="In Ref. 4; AAC52260." evidence="7" ref="4">
    <original>G</original>
    <variation>V</variation>
    <location>
        <position position="367"/>
    </location>
</feature>
<feature type="sequence conflict" description="In Ref. 4; AAC52260." evidence="7" ref="4">
    <original>G</original>
    <variation>D</variation>
    <location>
        <position position="373"/>
    </location>
</feature>
<feature type="sequence conflict" description="In Ref. 4; AAC52260." evidence="7" ref="4">
    <original>AM</original>
    <variation>PI</variation>
    <location>
        <begin position="376"/>
        <end position="377"/>
    </location>
</feature>
<evidence type="ECO:0000250" key="1"/>
<evidence type="ECO:0000250" key="2">
    <source>
        <dbReference type="UniProtKB" id="P42575"/>
    </source>
</evidence>
<evidence type="ECO:0000255" key="3">
    <source>
        <dbReference type="PROSITE-ProRule" id="PRU00046"/>
    </source>
</evidence>
<evidence type="ECO:0000256" key="4">
    <source>
        <dbReference type="SAM" id="MobiDB-lite"/>
    </source>
</evidence>
<evidence type="ECO:0000269" key="5">
    <source>
    </source>
</evidence>
<evidence type="ECO:0000303" key="6">
    <source>
    </source>
</evidence>
<evidence type="ECO:0000305" key="7"/>
<protein>
    <recommendedName>
        <fullName>Caspase-2</fullName>
        <shortName>CASP-2</shortName>
        <ecNumber>3.4.22.55</ecNumber>
    </recommendedName>
    <alternativeName>
        <fullName>Protease ICH-1</fullName>
    </alternativeName>
    <component>
        <recommendedName>
            <fullName>Caspase-2 subunit p18</fullName>
        </recommendedName>
    </component>
    <component>
        <recommendedName>
            <fullName>Caspase-2 subunit p13</fullName>
        </recommendedName>
    </component>
    <component>
        <recommendedName>
            <fullName>Caspase-2 subunit p12</fullName>
        </recommendedName>
    </component>
</protein>
<name>CASP2_RAT</name>
<accession>P55215</accession>
<accession>O35398</accession>
<accession>O55194</accession>
<accession>Q9WUI6</accession>